<organism>
    <name type="scientific">Pentatoma rufipes</name>
    <name type="common">Forest bug</name>
    <name type="synonym">Cimex rufipes</name>
    <dbReference type="NCBI Taxonomy" id="286670"/>
    <lineage>
        <taxon>Eukaryota</taxon>
        <taxon>Metazoa</taxon>
        <taxon>Ecdysozoa</taxon>
        <taxon>Arthropoda</taxon>
        <taxon>Hexapoda</taxon>
        <taxon>Insecta</taxon>
        <taxon>Pterygota</taxon>
        <taxon>Neoptera</taxon>
        <taxon>Paraneoptera</taxon>
        <taxon>Hemiptera</taxon>
        <taxon>Heteroptera</taxon>
        <taxon>Panheteroptera</taxon>
        <taxon>Pentatomomorpha</taxon>
        <taxon>Pentatomoidea</taxon>
        <taxon>Pentatomidae</taxon>
        <taxon>Pentatominae</taxon>
        <taxon>Pentatoma</taxon>
    </lineage>
</organism>
<sequence>SPASGFFGMR</sequence>
<name>TRP4_PENRU</name>
<reference evidence="3" key="1">
    <citation type="journal article" date="2009" name="Peptides">
        <title>Neuropeptides in Heteroptera: identification of allatotropin-related peptide and tachykinin-related peptides using MALDI-TOF mass spectrometry.</title>
        <authorList>
            <person name="Neupert S."/>
            <person name="Russell W.K."/>
            <person name="Russell D.H."/>
            <person name="Lopez J.D. Jr."/>
            <person name="Predel R."/>
            <person name="Nachman R.J."/>
        </authorList>
    </citation>
    <scope>PROTEIN SEQUENCE</scope>
    <scope>SUBCELLULAR LOCATION</scope>
    <scope>TISSUE SPECIFICITY</scope>
    <scope>AMIDATION AT ARG-10</scope>
    <source>
        <tissue evidence="1">Antennal lobe</tissue>
    </source>
</reference>
<evidence type="ECO:0000269" key="1">
    <source>
    </source>
</evidence>
<evidence type="ECO:0000303" key="2">
    <source>
    </source>
</evidence>
<evidence type="ECO:0000305" key="3"/>
<comment type="subcellular location">
    <subcellularLocation>
        <location evidence="1 3">Secreted</location>
    </subcellularLocation>
</comment>
<comment type="tissue specificity">
    <text evidence="1">Expressed in the antennal lobe (at protein level).</text>
</comment>
<dbReference type="GO" id="GO:0005576">
    <property type="term" value="C:extracellular region"/>
    <property type="evidence" value="ECO:0007005"/>
    <property type="project" value="UniProtKB"/>
</dbReference>
<dbReference type="GO" id="GO:0007218">
    <property type="term" value="P:neuropeptide signaling pathway"/>
    <property type="evidence" value="ECO:0007669"/>
    <property type="project" value="UniProtKB-KW"/>
</dbReference>
<proteinExistence type="evidence at protein level"/>
<accession>P86590</accession>
<feature type="peptide" id="PRO_0000395659" description="Tachykinin-related peptide 4" evidence="1">
    <location>
        <begin position="1"/>
        <end position="10"/>
    </location>
</feature>
<feature type="modified residue" description="Arginine amide" evidence="1">
    <location>
        <position position="10"/>
    </location>
</feature>
<protein>
    <recommendedName>
        <fullName evidence="2">Tachykinin-related peptide 4</fullName>
        <shortName evidence="2">TKRP-4</shortName>
    </recommendedName>
</protein>
<keyword id="KW-0027">Amidation</keyword>
<keyword id="KW-0903">Direct protein sequencing</keyword>
<keyword id="KW-0527">Neuropeptide</keyword>
<keyword id="KW-0964">Secreted</keyword>